<name>E4PD_VIBPA</name>
<gene>
    <name evidence="1" type="primary">epd</name>
    <name type="ordered locus">VP2601</name>
</gene>
<organism>
    <name type="scientific">Vibrio parahaemolyticus serotype O3:K6 (strain RIMD 2210633)</name>
    <dbReference type="NCBI Taxonomy" id="223926"/>
    <lineage>
        <taxon>Bacteria</taxon>
        <taxon>Pseudomonadati</taxon>
        <taxon>Pseudomonadota</taxon>
        <taxon>Gammaproteobacteria</taxon>
        <taxon>Vibrionales</taxon>
        <taxon>Vibrionaceae</taxon>
        <taxon>Vibrio</taxon>
    </lineage>
</organism>
<accession>Q87LL0</accession>
<protein>
    <recommendedName>
        <fullName evidence="1">D-erythrose-4-phosphate dehydrogenase</fullName>
        <shortName evidence="1">E4PDH</shortName>
        <ecNumber evidence="1">1.2.1.72</ecNumber>
    </recommendedName>
</protein>
<comment type="function">
    <text evidence="1">Catalyzes the NAD-dependent conversion of D-erythrose 4-phosphate to 4-phosphoerythronate.</text>
</comment>
<comment type="catalytic activity">
    <reaction evidence="1">
        <text>D-erythrose 4-phosphate + NAD(+) + H2O = 4-phospho-D-erythronate + NADH + 2 H(+)</text>
        <dbReference type="Rhea" id="RHEA:12056"/>
        <dbReference type="ChEBI" id="CHEBI:15377"/>
        <dbReference type="ChEBI" id="CHEBI:15378"/>
        <dbReference type="ChEBI" id="CHEBI:16897"/>
        <dbReference type="ChEBI" id="CHEBI:57540"/>
        <dbReference type="ChEBI" id="CHEBI:57945"/>
        <dbReference type="ChEBI" id="CHEBI:58766"/>
        <dbReference type="EC" id="1.2.1.72"/>
    </reaction>
</comment>
<comment type="pathway">
    <text evidence="1">Cofactor biosynthesis; pyridoxine 5'-phosphate biosynthesis; pyridoxine 5'-phosphate from D-erythrose 4-phosphate: step 1/5.</text>
</comment>
<comment type="subunit">
    <text evidence="1">Homotetramer.</text>
</comment>
<comment type="subcellular location">
    <subcellularLocation>
        <location evidence="1">Cytoplasm</location>
    </subcellularLocation>
</comment>
<comment type="similarity">
    <text evidence="1">Belongs to the glyceraldehyde-3-phosphate dehydrogenase family. Epd subfamily.</text>
</comment>
<reference key="1">
    <citation type="journal article" date="2003" name="Lancet">
        <title>Genome sequence of Vibrio parahaemolyticus: a pathogenic mechanism distinct from that of V. cholerae.</title>
        <authorList>
            <person name="Makino K."/>
            <person name="Oshima K."/>
            <person name="Kurokawa K."/>
            <person name="Yokoyama K."/>
            <person name="Uda T."/>
            <person name="Tagomori K."/>
            <person name="Iijima Y."/>
            <person name="Najima M."/>
            <person name="Nakano M."/>
            <person name="Yamashita A."/>
            <person name="Kubota Y."/>
            <person name="Kimura S."/>
            <person name="Yasunaga T."/>
            <person name="Honda T."/>
            <person name="Shinagawa H."/>
            <person name="Hattori M."/>
            <person name="Iida T."/>
        </authorList>
    </citation>
    <scope>NUCLEOTIDE SEQUENCE [LARGE SCALE GENOMIC DNA]</scope>
    <source>
        <strain>RIMD 2210633</strain>
    </source>
</reference>
<evidence type="ECO:0000255" key="1">
    <source>
        <dbReference type="HAMAP-Rule" id="MF_01640"/>
    </source>
</evidence>
<proteinExistence type="inferred from homology"/>
<keyword id="KW-0963">Cytoplasm</keyword>
<keyword id="KW-0520">NAD</keyword>
<keyword id="KW-0560">Oxidoreductase</keyword>
<keyword id="KW-0664">Pyridoxine biosynthesis</keyword>
<dbReference type="EC" id="1.2.1.72" evidence="1"/>
<dbReference type="EMBL" id="BA000031">
    <property type="protein sequence ID" value="BAC60864.1"/>
    <property type="molecule type" value="Genomic_DNA"/>
</dbReference>
<dbReference type="RefSeq" id="NP_798980.1">
    <property type="nucleotide sequence ID" value="NC_004603.1"/>
</dbReference>
<dbReference type="RefSeq" id="WP_005461726.1">
    <property type="nucleotide sequence ID" value="NC_004603.1"/>
</dbReference>
<dbReference type="SMR" id="Q87LL0"/>
<dbReference type="GeneID" id="1190125"/>
<dbReference type="KEGG" id="vpa:VP2601"/>
<dbReference type="PATRIC" id="fig|223926.6.peg.2498"/>
<dbReference type="eggNOG" id="COG0057">
    <property type="taxonomic scope" value="Bacteria"/>
</dbReference>
<dbReference type="HOGENOM" id="CLU_030140_0_2_6"/>
<dbReference type="UniPathway" id="UPA00244">
    <property type="reaction ID" value="UER00309"/>
</dbReference>
<dbReference type="Proteomes" id="UP000002493">
    <property type="component" value="Chromosome 1"/>
</dbReference>
<dbReference type="GO" id="GO:0005737">
    <property type="term" value="C:cytoplasm"/>
    <property type="evidence" value="ECO:0007669"/>
    <property type="project" value="UniProtKB-SubCell"/>
</dbReference>
<dbReference type="GO" id="GO:0048001">
    <property type="term" value="F:erythrose-4-phosphate dehydrogenase activity"/>
    <property type="evidence" value="ECO:0007669"/>
    <property type="project" value="UniProtKB-UniRule"/>
</dbReference>
<dbReference type="GO" id="GO:0051287">
    <property type="term" value="F:NAD binding"/>
    <property type="evidence" value="ECO:0007669"/>
    <property type="project" value="InterPro"/>
</dbReference>
<dbReference type="GO" id="GO:0042823">
    <property type="term" value="P:pyridoxal phosphate biosynthetic process"/>
    <property type="evidence" value="ECO:0007669"/>
    <property type="project" value="UniProtKB-UniRule"/>
</dbReference>
<dbReference type="GO" id="GO:0008615">
    <property type="term" value="P:pyridoxine biosynthetic process"/>
    <property type="evidence" value="ECO:0007669"/>
    <property type="project" value="UniProtKB-UniRule"/>
</dbReference>
<dbReference type="CDD" id="cd23937">
    <property type="entry name" value="GAPDH_C_E4PDH"/>
    <property type="match status" value="1"/>
</dbReference>
<dbReference type="CDD" id="cd17892">
    <property type="entry name" value="GAPDH_N_E4PDH"/>
    <property type="match status" value="1"/>
</dbReference>
<dbReference type="FunFam" id="3.30.360.10:FF:000007">
    <property type="entry name" value="D-erythrose-4-phosphate dehydrogenase"/>
    <property type="match status" value="1"/>
</dbReference>
<dbReference type="FunFam" id="3.40.50.720:FF:000001">
    <property type="entry name" value="Glyceraldehyde-3-phosphate dehydrogenase"/>
    <property type="match status" value="1"/>
</dbReference>
<dbReference type="Gene3D" id="3.30.360.10">
    <property type="entry name" value="Dihydrodipicolinate Reductase, domain 2"/>
    <property type="match status" value="1"/>
</dbReference>
<dbReference type="Gene3D" id="3.40.50.720">
    <property type="entry name" value="NAD(P)-binding Rossmann-like Domain"/>
    <property type="match status" value="1"/>
</dbReference>
<dbReference type="HAMAP" id="MF_01640">
    <property type="entry name" value="E4P_dehydrog"/>
    <property type="match status" value="1"/>
</dbReference>
<dbReference type="InterPro" id="IPR006422">
    <property type="entry name" value="E4P_DH_bac"/>
</dbReference>
<dbReference type="InterPro" id="IPR020831">
    <property type="entry name" value="GlycerAld/Erythrose_P_DH"/>
</dbReference>
<dbReference type="InterPro" id="IPR020829">
    <property type="entry name" value="GlycerAld_3-P_DH_cat"/>
</dbReference>
<dbReference type="InterPro" id="IPR020828">
    <property type="entry name" value="GlycerAld_3-P_DH_NAD(P)-bd"/>
</dbReference>
<dbReference type="InterPro" id="IPR036291">
    <property type="entry name" value="NAD(P)-bd_dom_sf"/>
</dbReference>
<dbReference type="NCBIfam" id="TIGR01532">
    <property type="entry name" value="E4PD_g-proteo"/>
    <property type="match status" value="1"/>
</dbReference>
<dbReference type="NCBIfam" id="NF010058">
    <property type="entry name" value="PRK13535.1"/>
    <property type="match status" value="1"/>
</dbReference>
<dbReference type="PANTHER" id="PTHR43148">
    <property type="entry name" value="GLYCERALDEHYDE-3-PHOSPHATE DEHYDROGENASE 2"/>
    <property type="match status" value="1"/>
</dbReference>
<dbReference type="Pfam" id="PF02800">
    <property type="entry name" value="Gp_dh_C"/>
    <property type="match status" value="1"/>
</dbReference>
<dbReference type="Pfam" id="PF00044">
    <property type="entry name" value="Gp_dh_N"/>
    <property type="match status" value="1"/>
</dbReference>
<dbReference type="PIRSF" id="PIRSF000149">
    <property type="entry name" value="GAP_DH"/>
    <property type="match status" value="1"/>
</dbReference>
<dbReference type="PRINTS" id="PR00078">
    <property type="entry name" value="G3PDHDRGNASE"/>
</dbReference>
<dbReference type="SMART" id="SM00846">
    <property type="entry name" value="Gp_dh_N"/>
    <property type="match status" value="1"/>
</dbReference>
<dbReference type="SUPFAM" id="SSF55347">
    <property type="entry name" value="Glyceraldehyde-3-phosphate dehydrogenase-like, C-terminal domain"/>
    <property type="match status" value="1"/>
</dbReference>
<dbReference type="SUPFAM" id="SSF51735">
    <property type="entry name" value="NAD(P)-binding Rossmann-fold domains"/>
    <property type="match status" value="1"/>
</dbReference>
<sequence>MLKVAINGFGRIGRNVLRAVYESGKHQQIKVVAVNELAQPEAMAHLLQYDTSHGRFGKKISHDQEHLNVHHESGEYDAIRILHLSEIELLPWRDLEVDIVLDCTGVYGSKADGLAHIEAGAKKVLFSHPGANDLDNTIIYGVNHETLKDEHRVVSNGSCTTNCIVPIIKVLDEAFGIESGTITTIHSSMNDQQVIDAYHNDLRRTRAASQSIIPVDTKLHKGIERIFPKFSNKFEAISVRVPTVNVTAMDLSVTINTNVKVNDVNQTIVNASQCTLRNIVDYTESPLVSIDFNHDPHSAIVDGTQTRVSNGQLVKMLVWCDNEWGFANRMLDTALAMKASSQVEL</sequence>
<feature type="chain" id="PRO_0000293175" description="D-erythrose-4-phosphate dehydrogenase">
    <location>
        <begin position="1"/>
        <end position="345"/>
    </location>
</feature>
<feature type="active site" description="Nucleophile" evidence="1">
    <location>
        <position position="159"/>
    </location>
</feature>
<feature type="binding site" evidence="1">
    <location>
        <begin position="11"/>
        <end position="12"/>
    </location>
    <ligand>
        <name>NAD(+)</name>
        <dbReference type="ChEBI" id="CHEBI:57540"/>
    </ligand>
</feature>
<feature type="binding site" evidence="1">
    <location>
        <begin position="158"/>
        <end position="160"/>
    </location>
    <ligand>
        <name>substrate</name>
    </ligand>
</feature>
<feature type="binding site" evidence="1">
    <location>
        <position position="204"/>
    </location>
    <ligand>
        <name>substrate</name>
    </ligand>
</feature>
<feature type="binding site" evidence="1">
    <location>
        <begin position="217"/>
        <end position="218"/>
    </location>
    <ligand>
        <name>substrate</name>
    </ligand>
</feature>
<feature type="binding site" evidence="1">
    <location>
        <position position="240"/>
    </location>
    <ligand>
        <name>substrate</name>
    </ligand>
</feature>
<feature type="binding site" evidence="1">
    <location>
        <position position="322"/>
    </location>
    <ligand>
        <name>NAD(+)</name>
        <dbReference type="ChEBI" id="CHEBI:57540"/>
    </ligand>
</feature>
<feature type="site" description="Activates thiol group during catalysis" evidence="1">
    <location>
        <position position="186"/>
    </location>
</feature>